<feature type="chain" id="PRO_0000229022" description="Serine/threonine-protein kinase 36">
    <location>
        <begin position="1"/>
        <end position="1315"/>
    </location>
</feature>
<feature type="domain" description="Protein kinase" evidence="5">
    <location>
        <begin position="4"/>
        <end position="254"/>
    </location>
</feature>
<feature type="region of interest" description="Disordered" evidence="7">
    <location>
        <begin position="312"/>
        <end position="345"/>
    </location>
</feature>
<feature type="region of interest" description="Disordered" evidence="7">
    <location>
        <begin position="365"/>
        <end position="405"/>
    </location>
</feature>
<feature type="compositionally biased region" description="Basic and acidic residues" evidence="7">
    <location>
        <begin position="379"/>
        <end position="397"/>
    </location>
</feature>
<feature type="active site" description="Proton acceptor" evidence="2 5 6">
    <location>
        <position position="125"/>
    </location>
</feature>
<feature type="binding site" evidence="2 5">
    <location>
        <begin position="10"/>
        <end position="18"/>
    </location>
    <ligand>
        <name>ATP</name>
        <dbReference type="ChEBI" id="CHEBI:30616"/>
    </ligand>
</feature>
<feature type="binding site" evidence="2 5">
    <location>
        <position position="33"/>
    </location>
    <ligand>
        <name>ATP</name>
        <dbReference type="ChEBI" id="CHEBI:30616"/>
    </ligand>
</feature>
<dbReference type="EC" id="2.7.11.1"/>
<dbReference type="EMBL" id="CR859020">
    <property type="protein sequence ID" value="CAH91215.1"/>
    <property type="molecule type" value="mRNA"/>
</dbReference>
<dbReference type="SMR" id="Q5RAJ5"/>
<dbReference type="FunCoup" id="Q5RAJ5">
    <property type="interactions" value="1505"/>
</dbReference>
<dbReference type="STRING" id="9601.ENSPPYP00000014729"/>
<dbReference type="eggNOG" id="KOG0597">
    <property type="taxonomic scope" value="Eukaryota"/>
</dbReference>
<dbReference type="InParanoid" id="Q5RAJ5"/>
<dbReference type="Proteomes" id="UP000001595">
    <property type="component" value="Unplaced"/>
</dbReference>
<dbReference type="GO" id="GO:0042995">
    <property type="term" value="C:cell projection"/>
    <property type="evidence" value="ECO:0007669"/>
    <property type="project" value="UniProtKB-KW"/>
</dbReference>
<dbReference type="GO" id="GO:0005737">
    <property type="term" value="C:cytoplasm"/>
    <property type="evidence" value="ECO:0000250"/>
    <property type="project" value="UniProtKB"/>
</dbReference>
<dbReference type="GO" id="GO:0005856">
    <property type="term" value="C:cytoskeleton"/>
    <property type="evidence" value="ECO:0007669"/>
    <property type="project" value="UniProtKB-KW"/>
</dbReference>
<dbReference type="GO" id="GO:0005634">
    <property type="term" value="C:nucleus"/>
    <property type="evidence" value="ECO:0000250"/>
    <property type="project" value="UniProtKB"/>
</dbReference>
<dbReference type="GO" id="GO:0005524">
    <property type="term" value="F:ATP binding"/>
    <property type="evidence" value="ECO:0007669"/>
    <property type="project" value="UniProtKB-KW"/>
</dbReference>
<dbReference type="GO" id="GO:0046872">
    <property type="term" value="F:metal ion binding"/>
    <property type="evidence" value="ECO:0007669"/>
    <property type="project" value="UniProtKB-KW"/>
</dbReference>
<dbReference type="GO" id="GO:0106310">
    <property type="term" value="F:protein serine kinase activity"/>
    <property type="evidence" value="ECO:0007669"/>
    <property type="project" value="RHEA"/>
</dbReference>
<dbReference type="GO" id="GO:0004674">
    <property type="term" value="F:protein serine/threonine kinase activity"/>
    <property type="evidence" value="ECO:0007669"/>
    <property type="project" value="UniProtKB-KW"/>
</dbReference>
<dbReference type="GO" id="GO:0001222">
    <property type="term" value="F:transcription corepressor binding"/>
    <property type="evidence" value="ECO:0000250"/>
    <property type="project" value="UniProtKB"/>
</dbReference>
<dbReference type="GO" id="GO:0035082">
    <property type="term" value="P:axoneme assembly"/>
    <property type="evidence" value="ECO:0000250"/>
    <property type="project" value="UniProtKB"/>
</dbReference>
<dbReference type="GO" id="GO:0060271">
    <property type="term" value="P:cilium assembly"/>
    <property type="evidence" value="ECO:0000250"/>
    <property type="project" value="UniProtKB"/>
</dbReference>
<dbReference type="GO" id="GO:0045880">
    <property type="term" value="P:positive regulation of smoothened signaling pathway"/>
    <property type="evidence" value="ECO:0000250"/>
    <property type="project" value="UniProtKB"/>
</dbReference>
<dbReference type="GO" id="GO:0009791">
    <property type="term" value="P:post-embryonic development"/>
    <property type="evidence" value="ECO:0000250"/>
    <property type="project" value="UniProtKB"/>
</dbReference>
<dbReference type="GO" id="GO:0051090">
    <property type="term" value="P:regulation of DNA-binding transcription factor activity"/>
    <property type="evidence" value="ECO:0000250"/>
    <property type="project" value="UniProtKB"/>
</dbReference>
<dbReference type="GO" id="GO:0007224">
    <property type="term" value="P:smoothened signaling pathway"/>
    <property type="evidence" value="ECO:0000250"/>
    <property type="project" value="UniProtKB"/>
</dbReference>
<dbReference type="CDD" id="cd14002">
    <property type="entry name" value="STKc_STK36"/>
    <property type="match status" value="1"/>
</dbReference>
<dbReference type="FunFam" id="3.30.200.20:FF:000042">
    <property type="entry name" value="Aurora kinase A"/>
    <property type="match status" value="1"/>
</dbReference>
<dbReference type="FunFam" id="1.10.510.10:FF:000292">
    <property type="entry name" value="Serine/threonine-protein kinase 36"/>
    <property type="match status" value="1"/>
</dbReference>
<dbReference type="FunFam" id="1.25.10.10:FF:000325">
    <property type="entry name" value="Serine/threonine-protein kinase 36"/>
    <property type="match status" value="1"/>
</dbReference>
<dbReference type="Gene3D" id="1.25.10.10">
    <property type="entry name" value="Leucine-rich Repeat Variant"/>
    <property type="match status" value="1"/>
</dbReference>
<dbReference type="Gene3D" id="1.10.510.10">
    <property type="entry name" value="Transferase(Phosphotransferase) domain 1"/>
    <property type="match status" value="1"/>
</dbReference>
<dbReference type="InterPro" id="IPR011989">
    <property type="entry name" value="ARM-like"/>
</dbReference>
<dbReference type="InterPro" id="IPR016024">
    <property type="entry name" value="ARM-type_fold"/>
</dbReference>
<dbReference type="InterPro" id="IPR011009">
    <property type="entry name" value="Kinase-like_dom_sf"/>
</dbReference>
<dbReference type="InterPro" id="IPR000719">
    <property type="entry name" value="Prot_kinase_dom"/>
</dbReference>
<dbReference type="InterPro" id="IPR017441">
    <property type="entry name" value="Protein_kinase_ATP_BS"/>
</dbReference>
<dbReference type="InterPro" id="IPR008271">
    <property type="entry name" value="Ser/Thr_kinase_AS"/>
</dbReference>
<dbReference type="PANTHER" id="PTHR22983">
    <property type="entry name" value="PROTEIN KINASE RELATED"/>
    <property type="match status" value="1"/>
</dbReference>
<dbReference type="PANTHER" id="PTHR22983:SF6">
    <property type="entry name" value="SERINE_THREONINE-PROTEIN KINASE 36"/>
    <property type="match status" value="1"/>
</dbReference>
<dbReference type="Pfam" id="PF13646">
    <property type="entry name" value="HEAT_2"/>
    <property type="match status" value="1"/>
</dbReference>
<dbReference type="Pfam" id="PF00069">
    <property type="entry name" value="Pkinase"/>
    <property type="match status" value="1"/>
</dbReference>
<dbReference type="SMART" id="SM00220">
    <property type="entry name" value="S_TKc"/>
    <property type="match status" value="1"/>
</dbReference>
<dbReference type="SUPFAM" id="SSF48371">
    <property type="entry name" value="ARM repeat"/>
    <property type="match status" value="1"/>
</dbReference>
<dbReference type="SUPFAM" id="SSF56112">
    <property type="entry name" value="Protein kinase-like (PK-like)"/>
    <property type="match status" value="1"/>
</dbReference>
<dbReference type="PROSITE" id="PS00107">
    <property type="entry name" value="PROTEIN_KINASE_ATP"/>
    <property type="match status" value="1"/>
</dbReference>
<dbReference type="PROSITE" id="PS50011">
    <property type="entry name" value="PROTEIN_KINASE_DOM"/>
    <property type="match status" value="1"/>
</dbReference>
<dbReference type="PROSITE" id="PS00108">
    <property type="entry name" value="PROTEIN_KINASE_ST"/>
    <property type="match status" value="1"/>
</dbReference>
<gene>
    <name evidence="4" type="primary">STK36</name>
</gene>
<sequence>MEKYHVLEMIGEGSFGRVYKGRRKYSAQVVALKFIPKLGRSEKELRNLQREIEIMRGLRHPNIVHMLDSFETDKEVVVVTDYAEGELLQILEDDGKLPEDQVQAIAAQLVSALYYLHSHRILHRDMKPQNILLAKGGGIKLCDFGFARAMSTNTMVLTSIKGTPLYMSPELVEERPYDHTADLWSVGCILYELAVGTPPFYATSIFQLVSLILKDPVRWPSTISPCFKNFLQGLLTKDPRQRLSWPDLLYHPFIAGHVTIITETAGPDLGTPFTSRLPPELQVLKDKQAHRLSPKGNQSRILTQAYERMAEEAMQKKHQNTGPALEQEDKTSKVAPGTAPLPRLGATPQESSLLAGILASELKSSWAESGTGEAPSAPRENRTTPDCERAFPEERPEVLGQRSTDAVDLEDEEPDSDNEWQHLLETTEPVPIQLKAPLTLLCNPDFCQRIQSQLHEAGGQILKGILEGASHILPAFRVLSSLLSSCSDSVALYSFCREAGLPGLLLSLLRHSQESNSLQQQSWYGTFLQDLMAVIQAYFACTFNLERSQTSDSLQVFQEAANLFLDLLGKLLAQPDDSERTLRRDNLMCFTVLCEAMDGNSRAISKAFYSSLLTTKQVVLDGLLRGLTVPQLPVHTPPGAPQVSQPLREQSEDIPGAISSALAAICTAPVGLPDCWDGKEQVCWHLANQLTEDSSQLRPSLVSGLQHPILCLHLLKVLYSCCLVSERLCRLLGQEPLALESLFMLVQGKVKVVDWEESTEVTLYFLSLLVFRLQNLPCGMEKLGSDVATLFTHSHVASLVSAAACLLGQLGQQGVTFDLQPMEWMAAATHALSAPAEVRLTPPGSCGFYDGLLILLLQLLTEQGKASLIRDMSSSEMWTVLRHRFSMVLRLPKEASAQEGELSLSNPPSPEPDWTLISPQGMAALLSLAMATFAQEPQLCLSCLSQHGSILMSILKHLLCPSFLNQLRQAPHGSEFLPVVVLSVCQLLCFPFALDMDADLLIGVLADLRDSEVAAHLLQVCCYHLPLTQVELPISLLTRLALTDPTSLNQFVNTVAASPRTIISFLSVALLSDQPLLTSDLLSLLAHTARVLSPSHLSFIQELLAGSDESYQSLRSLLGHPENSVRAHTYRLLGHLLQHSMALRGALQSQSGLLSLLLLGLGDKDPVVRCSASFAVGNAAYQAGPLGPALAAAVPSMTQLLGDPQAGIRRNVASALGNLGLEGLGEELLQCQVPQRLLEMACGDPQPNVKEAALIALRSLQQEPGIRQVLVSLGASEKLALLSLGNQLLPHSSPRPASAKHCRKLIHLLRPAHSM</sequence>
<evidence type="ECO:0000250" key="1"/>
<evidence type="ECO:0000250" key="2">
    <source>
        <dbReference type="UniProtKB" id="P23647"/>
    </source>
</evidence>
<evidence type="ECO:0000250" key="3">
    <source>
        <dbReference type="UniProtKB" id="Q69ZM6"/>
    </source>
</evidence>
<evidence type="ECO:0000250" key="4">
    <source>
        <dbReference type="UniProtKB" id="Q9NRP7"/>
    </source>
</evidence>
<evidence type="ECO:0000255" key="5">
    <source>
        <dbReference type="PROSITE-ProRule" id="PRU00159"/>
    </source>
</evidence>
<evidence type="ECO:0000255" key="6">
    <source>
        <dbReference type="PROSITE-ProRule" id="PRU10027"/>
    </source>
</evidence>
<evidence type="ECO:0000256" key="7">
    <source>
        <dbReference type="SAM" id="MobiDB-lite"/>
    </source>
</evidence>
<evidence type="ECO:0000305" key="8"/>
<evidence type="ECO:0000312" key="9">
    <source>
        <dbReference type="EMBL" id="CAH91215.1"/>
    </source>
</evidence>
<protein>
    <recommendedName>
        <fullName>Serine/threonine-protein kinase 36</fullName>
        <ecNumber>2.7.11.1</ecNumber>
    </recommendedName>
    <alternativeName>
        <fullName>Fused homolog</fullName>
    </alternativeName>
</protein>
<accession>Q5RAJ5</accession>
<keyword id="KW-0067">ATP-binding</keyword>
<keyword id="KW-0966">Cell projection</keyword>
<keyword id="KW-0970">Cilium biogenesis/degradation</keyword>
<keyword id="KW-0963">Cytoplasm</keyword>
<keyword id="KW-0206">Cytoskeleton</keyword>
<keyword id="KW-0217">Developmental protein</keyword>
<keyword id="KW-0418">Kinase</keyword>
<keyword id="KW-0460">Magnesium</keyword>
<keyword id="KW-0479">Metal-binding</keyword>
<keyword id="KW-0547">Nucleotide-binding</keyword>
<keyword id="KW-0539">Nucleus</keyword>
<keyword id="KW-1185">Reference proteome</keyword>
<keyword id="KW-0723">Serine/threonine-protein kinase</keyword>
<keyword id="KW-0808">Transferase</keyword>
<proteinExistence type="evidence at transcript level"/>
<organism>
    <name type="scientific">Pongo abelii</name>
    <name type="common">Sumatran orangutan</name>
    <name type="synonym">Pongo pygmaeus abelii</name>
    <dbReference type="NCBI Taxonomy" id="9601"/>
    <lineage>
        <taxon>Eukaryota</taxon>
        <taxon>Metazoa</taxon>
        <taxon>Chordata</taxon>
        <taxon>Craniata</taxon>
        <taxon>Vertebrata</taxon>
        <taxon>Euteleostomi</taxon>
        <taxon>Mammalia</taxon>
        <taxon>Eutheria</taxon>
        <taxon>Euarchontoglires</taxon>
        <taxon>Primates</taxon>
        <taxon>Haplorrhini</taxon>
        <taxon>Catarrhini</taxon>
        <taxon>Hominidae</taxon>
        <taxon>Pongo</taxon>
    </lineage>
</organism>
<comment type="function">
    <text evidence="3">Serine/threonine protein kinase which plays an important role in the sonic hedgehog (Shh) pathway by regulating the activity of GLI transcription factors. Controls the activity of the transcriptional regulators GLI1, GLI2 and GLI3 by opposing the effect of SUFU and promoting their nuclear localization. GLI2 requires an additional function of STK36 to become transcriptionally active, but the enzyme does not need to possess an active kinase catalytic site for this to occur. Required for postnatal development, possibly by regulating the homeostasis of cerebral spinal fluid or ciliary function. Essential for construction of the central pair apparatus of motile cilia (By similarity).</text>
</comment>
<comment type="catalytic activity">
    <reaction evidence="2">
        <text>L-seryl-[protein] + ATP = O-phospho-L-seryl-[protein] + ADP + H(+)</text>
        <dbReference type="Rhea" id="RHEA:17989"/>
        <dbReference type="Rhea" id="RHEA-COMP:9863"/>
        <dbReference type="Rhea" id="RHEA-COMP:11604"/>
        <dbReference type="ChEBI" id="CHEBI:15378"/>
        <dbReference type="ChEBI" id="CHEBI:29999"/>
        <dbReference type="ChEBI" id="CHEBI:30616"/>
        <dbReference type="ChEBI" id="CHEBI:83421"/>
        <dbReference type="ChEBI" id="CHEBI:456216"/>
        <dbReference type="EC" id="2.7.11.1"/>
    </reaction>
</comment>
<comment type="catalytic activity">
    <reaction evidence="2">
        <text>L-threonyl-[protein] + ATP = O-phospho-L-threonyl-[protein] + ADP + H(+)</text>
        <dbReference type="Rhea" id="RHEA:46608"/>
        <dbReference type="Rhea" id="RHEA-COMP:11060"/>
        <dbReference type="Rhea" id="RHEA-COMP:11605"/>
        <dbReference type="ChEBI" id="CHEBI:15378"/>
        <dbReference type="ChEBI" id="CHEBI:30013"/>
        <dbReference type="ChEBI" id="CHEBI:30616"/>
        <dbReference type="ChEBI" id="CHEBI:61977"/>
        <dbReference type="ChEBI" id="CHEBI:456216"/>
        <dbReference type="EC" id="2.7.11.1"/>
    </reaction>
</comment>
<comment type="cofactor">
    <cofactor evidence="8">
        <name>Mg(2+)</name>
        <dbReference type="ChEBI" id="CHEBI:18420"/>
    </cofactor>
</comment>
<comment type="subunit">
    <text evidence="1">Interacts with SPAG16 and KIF27.</text>
</comment>
<comment type="subcellular location">
    <subcellularLocation>
        <location evidence="4">Cytoplasm</location>
    </subcellularLocation>
    <subcellularLocation>
        <location evidence="4">Nucleus</location>
    </subcellularLocation>
    <subcellularLocation>
        <location>Cytoplasm</location>
        <location>Cytoskeleton</location>
        <location>Cilium axoneme</location>
    </subcellularLocation>
    <text evidence="4">Low levels also present in the nucleus.</text>
</comment>
<comment type="similarity">
    <text evidence="5">Belongs to the protein kinase superfamily. Ser/Thr protein kinase family.</text>
</comment>
<reference evidence="8 9" key="1">
    <citation type="submission" date="2004-11" db="EMBL/GenBank/DDBJ databases">
        <authorList>
            <consortium name="The German cDNA consortium"/>
        </authorList>
    </citation>
    <scope>NUCLEOTIDE SEQUENCE [LARGE SCALE MRNA]</scope>
    <source>
        <tissue evidence="9">Kidney</tissue>
    </source>
</reference>
<name>STK36_PONAB</name>